<gene>
    <name evidence="1" type="primary">cas2-2</name>
    <name type="ordered locus">ssr7072</name>
</gene>
<dbReference type="EC" id="3.1.-.-" evidence="1"/>
<dbReference type="EMBL" id="AP004311">
    <property type="protein sequence ID" value="BAD01974.1"/>
    <property type="molecule type" value="Genomic_DNA"/>
</dbReference>
<dbReference type="SMR" id="Q6ZEC6"/>
<dbReference type="EnsemblBacteria" id="BAD01974">
    <property type="protein sequence ID" value="BAD01974"/>
    <property type="gene ID" value="BAD01974"/>
</dbReference>
<dbReference type="KEGG" id="syn:ssr7072"/>
<dbReference type="InParanoid" id="Q6ZEC6"/>
<dbReference type="Proteomes" id="UP000001425">
    <property type="component" value="Plasmid pSYSA"/>
</dbReference>
<dbReference type="GO" id="GO:0046872">
    <property type="term" value="F:metal ion binding"/>
    <property type="evidence" value="ECO:0007669"/>
    <property type="project" value="UniProtKB-UniRule"/>
</dbReference>
<dbReference type="GO" id="GO:0004521">
    <property type="term" value="F:RNA endonuclease activity"/>
    <property type="evidence" value="ECO:0007669"/>
    <property type="project" value="InterPro"/>
</dbReference>
<dbReference type="GO" id="GO:0051607">
    <property type="term" value="P:defense response to virus"/>
    <property type="evidence" value="ECO:0007669"/>
    <property type="project" value="UniProtKB-UniRule"/>
</dbReference>
<dbReference type="GO" id="GO:0043571">
    <property type="term" value="P:maintenance of CRISPR repeat elements"/>
    <property type="evidence" value="ECO:0007669"/>
    <property type="project" value="UniProtKB-UniRule"/>
</dbReference>
<dbReference type="CDD" id="cd09725">
    <property type="entry name" value="Cas2_I_II_III"/>
    <property type="match status" value="1"/>
</dbReference>
<dbReference type="Gene3D" id="3.30.70.240">
    <property type="match status" value="1"/>
</dbReference>
<dbReference type="HAMAP" id="MF_01471">
    <property type="entry name" value="Cas2"/>
    <property type="match status" value="1"/>
</dbReference>
<dbReference type="InterPro" id="IPR021127">
    <property type="entry name" value="CRISPR_associated_Cas2"/>
</dbReference>
<dbReference type="InterPro" id="IPR019199">
    <property type="entry name" value="Virulence_VapD/CRISPR_Cas2"/>
</dbReference>
<dbReference type="NCBIfam" id="TIGR01573">
    <property type="entry name" value="cas2"/>
    <property type="match status" value="1"/>
</dbReference>
<dbReference type="PANTHER" id="PTHR34405">
    <property type="entry name" value="CRISPR-ASSOCIATED ENDORIBONUCLEASE CAS2"/>
    <property type="match status" value="1"/>
</dbReference>
<dbReference type="PANTHER" id="PTHR34405:SF3">
    <property type="entry name" value="CRISPR-ASSOCIATED ENDORIBONUCLEASE CAS2 3"/>
    <property type="match status" value="1"/>
</dbReference>
<dbReference type="Pfam" id="PF09827">
    <property type="entry name" value="CRISPR_Cas2"/>
    <property type="match status" value="1"/>
</dbReference>
<dbReference type="PIRSF" id="PIRSF032582">
    <property type="entry name" value="Cas2"/>
    <property type="match status" value="1"/>
</dbReference>
<dbReference type="SUPFAM" id="SSF143430">
    <property type="entry name" value="TTP0101/SSO1404-like"/>
    <property type="match status" value="1"/>
</dbReference>
<evidence type="ECO:0000255" key="1">
    <source>
        <dbReference type="HAMAP-Rule" id="MF_01471"/>
    </source>
</evidence>
<sequence>MDFWLVCYDVRDDKRRRKLAKLLEQRCQRVQYSVFECPLPEKVLTDLLHRRWLKELNLKEDSLRAYPLQRQSRSQAKIFGSPDLYEPPDFLIL</sequence>
<accession>Q6ZEC6</accession>
<reference key="1">
    <citation type="journal article" date="2003" name="DNA Res.">
        <title>Structural analysis of four large plasmids harboring in a unicellular cyanobacterium, Synechocystis sp. PCC 6803.</title>
        <authorList>
            <person name="Kaneko T."/>
            <person name="Nakamura Y."/>
            <person name="Sasamoto S."/>
            <person name="Watanabe A."/>
            <person name="Kohara M."/>
            <person name="Matsumoto M."/>
            <person name="Shimpo S."/>
            <person name="Yamada M."/>
            <person name="Tabata S."/>
        </authorList>
    </citation>
    <scope>NUCLEOTIDE SEQUENCE [LARGE SCALE GENOMIC DNA]</scope>
    <source>
        <strain>ATCC 27184 / PCC 6803 / Kazusa</strain>
    </source>
</reference>
<organism>
    <name type="scientific">Synechocystis sp. (strain ATCC 27184 / PCC 6803 / Kazusa)</name>
    <dbReference type="NCBI Taxonomy" id="1111708"/>
    <lineage>
        <taxon>Bacteria</taxon>
        <taxon>Bacillati</taxon>
        <taxon>Cyanobacteriota</taxon>
        <taxon>Cyanophyceae</taxon>
        <taxon>Synechococcales</taxon>
        <taxon>Merismopediaceae</taxon>
        <taxon>Synechocystis</taxon>
    </lineage>
</organism>
<protein>
    <recommendedName>
        <fullName evidence="1">CRISPR-associated endoribonuclease Cas2 2</fullName>
        <ecNumber evidence="1">3.1.-.-</ecNumber>
    </recommendedName>
</protein>
<comment type="function">
    <text evidence="1">CRISPR (clustered regularly interspaced short palindromic repeat), is an adaptive immune system that provides protection against mobile genetic elements (viruses, transposable elements and conjugative plasmids). CRISPR clusters contain sequences complementary to antecedent mobile elements and target invading nucleic acids. CRISPR clusters are transcribed and processed into CRISPR RNA (crRNA). Functions as a ssRNA-specific endoribonuclease. Involved in the integration of spacer DNA into the CRISPR cassette.</text>
</comment>
<comment type="cofactor">
    <cofactor evidence="1">
        <name>Mg(2+)</name>
        <dbReference type="ChEBI" id="CHEBI:18420"/>
    </cofactor>
</comment>
<comment type="subunit">
    <text evidence="1">Homodimer, forms a heterotetramer with a Cas1 homodimer.</text>
</comment>
<comment type="similarity">
    <text evidence="1">Belongs to the CRISPR-associated endoribonuclease Cas2 protein family.</text>
</comment>
<geneLocation type="plasmid">
    <name>pSYSA</name>
</geneLocation>
<proteinExistence type="inferred from homology"/>
<keyword id="KW-0051">Antiviral defense</keyword>
<keyword id="KW-0255">Endonuclease</keyword>
<keyword id="KW-0378">Hydrolase</keyword>
<keyword id="KW-0460">Magnesium</keyword>
<keyword id="KW-0479">Metal-binding</keyword>
<keyword id="KW-0540">Nuclease</keyword>
<keyword id="KW-0614">Plasmid</keyword>
<keyword id="KW-1185">Reference proteome</keyword>
<feature type="chain" id="PRO_0000417734" description="CRISPR-associated endoribonuclease Cas2 2">
    <location>
        <begin position="1"/>
        <end position="93"/>
    </location>
</feature>
<feature type="binding site" evidence="1">
    <location>
        <position position="9"/>
    </location>
    <ligand>
        <name>Mg(2+)</name>
        <dbReference type="ChEBI" id="CHEBI:18420"/>
        <note>catalytic</note>
    </ligand>
</feature>
<name>CAS2B_SYNY3</name>